<protein>
    <recommendedName>
        <fullName evidence="1">Small ribosomal subunit protein uS10</fullName>
    </recommendedName>
    <alternativeName>
        <fullName evidence="2">30S ribosomal protein S10</fullName>
    </alternativeName>
</protein>
<name>RS10_PORG3</name>
<sequence length="101" mass="11449">MSQKIRIKLKSYDYMLVDKSAEKIVKTVKAAGAMVSGPIPLPTHKRIFTVNRSTFVNKKSREQFELSSYKRLIDIYNSTAKTVDALMKLELPSGVEVEIKV</sequence>
<dbReference type="EMBL" id="AP009380">
    <property type="protein sequence ID" value="BAG34388.1"/>
    <property type="molecule type" value="Genomic_DNA"/>
</dbReference>
<dbReference type="RefSeq" id="WP_004583599.1">
    <property type="nucleotide sequence ID" value="NZ_CP025930.1"/>
</dbReference>
<dbReference type="SMR" id="B2RLZ3"/>
<dbReference type="GeneID" id="94550672"/>
<dbReference type="KEGG" id="pgn:PGN_1869"/>
<dbReference type="eggNOG" id="COG0051">
    <property type="taxonomic scope" value="Bacteria"/>
</dbReference>
<dbReference type="HOGENOM" id="CLU_122625_1_3_10"/>
<dbReference type="OrthoDB" id="9804464at2"/>
<dbReference type="BioCyc" id="PGIN431947:G1G2V-2083-MONOMER"/>
<dbReference type="Proteomes" id="UP000008842">
    <property type="component" value="Chromosome"/>
</dbReference>
<dbReference type="GO" id="GO:1990904">
    <property type="term" value="C:ribonucleoprotein complex"/>
    <property type="evidence" value="ECO:0007669"/>
    <property type="project" value="UniProtKB-KW"/>
</dbReference>
<dbReference type="GO" id="GO:0005840">
    <property type="term" value="C:ribosome"/>
    <property type="evidence" value="ECO:0007669"/>
    <property type="project" value="UniProtKB-KW"/>
</dbReference>
<dbReference type="GO" id="GO:0003735">
    <property type="term" value="F:structural constituent of ribosome"/>
    <property type="evidence" value="ECO:0007669"/>
    <property type="project" value="InterPro"/>
</dbReference>
<dbReference type="GO" id="GO:0000049">
    <property type="term" value="F:tRNA binding"/>
    <property type="evidence" value="ECO:0007669"/>
    <property type="project" value="UniProtKB-UniRule"/>
</dbReference>
<dbReference type="GO" id="GO:0006412">
    <property type="term" value="P:translation"/>
    <property type="evidence" value="ECO:0007669"/>
    <property type="project" value="UniProtKB-UniRule"/>
</dbReference>
<dbReference type="FunFam" id="3.30.70.600:FF:000003">
    <property type="entry name" value="30S ribosomal protein S10"/>
    <property type="match status" value="1"/>
</dbReference>
<dbReference type="Gene3D" id="3.30.70.600">
    <property type="entry name" value="Ribosomal protein S10 domain"/>
    <property type="match status" value="1"/>
</dbReference>
<dbReference type="HAMAP" id="MF_00508">
    <property type="entry name" value="Ribosomal_uS10"/>
    <property type="match status" value="1"/>
</dbReference>
<dbReference type="InterPro" id="IPR001848">
    <property type="entry name" value="Ribosomal_uS10"/>
</dbReference>
<dbReference type="InterPro" id="IPR018268">
    <property type="entry name" value="Ribosomal_uS10_CS"/>
</dbReference>
<dbReference type="InterPro" id="IPR027486">
    <property type="entry name" value="Ribosomal_uS10_dom"/>
</dbReference>
<dbReference type="InterPro" id="IPR036838">
    <property type="entry name" value="Ribosomal_uS10_dom_sf"/>
</dbReference>
<dbReference type="NCBIfam" id="NF001861">
    <property type="entry name" value="PRK00596.1"/>
    <property type="match status" value="1"/>
</dbReference>
<dbReference type="NCBIfam" id="TIGR01049">
    <property type="entry name" value="rpsJ_bact"/>
    <property type="match status" value="1"/>
</dbReference>
<dbReference type="PANTHER" id="PTHR11700">
    <property type="entry name" value="30S RIBOSOMAL PROTEIN S10 FAMILY MEMBER"/>
    <property type="match status" value="1"/>
</dbReference>
<dbReference type="Pfam" id="PF00338">
    <property type="entry name" value="Ribosomal_S10"/>
    <property type="match status" value="1"/>
</dbReference>
<dbReference type="PRINTS" id="PR00971">
    <property type="entry name" value="RIBOSOMALS10"/>
</dbReference>
<dbReference type="SMART" id="SM01403">
    <property type="entry name" value="Ribosomal_S10"/>
    <property type="match status" value="1"/>
</dbReference>
<dbReference type="SUPFAM" id="SSF54999">
    <property type="entry name" value="Ribosomal protein S10"/>
    <property type="match status" value="1"/>
</dbReference>
<dbReference type="PROSITE" id="PS00361">
    <property type="entry name" value="RIBOSOMAL_S10"/>
    <property type="match status" value="1"/>
</dbReference>
<keyword id="KW-0687">Ribonucleoprotein</keyword>
<keyword id="KW-0689">Ribosomal protein</keyword>
<reference key="1">
    <citation type="journal article" date="2008" name="DNA Res.">
        <title>Determination of the genome sequence of Porphyromonas gingivalis strain ATCC 33277 and genomic comparison with strain W83 revealed extensive genome rearrangements in P. gingivalis.</title>
        <authorList>
            <person name="Naito M."/>
            <person name="Hirakawa H."/>
            <person name="Yamashita A."/>
            <person name="Ohara N."/>
            <person name="Shoji M."/>
            <person name="Yukitake H."/>
            <person name="Nakayama K."/>
            <person name="Toh H."/>
            <person name="Yoshimura F."/>
            <person name="Kuhara S."/>
            <person name="Hattori M."/>
            <person name="Hayashi T."/>
            <person name="Nakayama K."/>
        </authorList>
    </citation>
    <scope>NUCLEOTIDE SEQUENCE [LARGE SCALE GENOMIC DNA]</scope>
    <source>
        <strain>ATCC 33277 / DSM 20709 / CIP 103683 / JCM 12257 / NCTC 11834 / 2561</strain>
    </source>
</reference>
<organism>
    <name type="scientific">Porphyromonas gingivalis (strain ATCC 33277 / DSM 20709 / CIP 103683 / JCM 12257 / NCTC 11834 / 2561)</name>
    <dbReference type="NCBI Taxonomy" id="431947"/>
    <lineage>
        <taxon>Bacteria</taxon>
        <taxon>Pseudomonadati</taxon>
        <taxon>Bacteroidota</taxon>
        <taxon>Bacteroidia</taxon>
        <taxon>Bacteroidales</taxon>
        <taxon>Porphyromonadaceae</taxon>
        <taxon>Porphyromonas</taxon>
    </lineage>
</organism>
<feature type="chain" id="PRO_1000127164" description="Small ribosomal subunit protein uS10">
    <location>
        <begin position="1"/>
        <end position="101"/>
    </location>
</feature>
<evidence type="ECO:0000255" key="1">
    <source>
        <dbReference type="HAMAP-Rule" id="MF_00508"/>
    </source>
</evidence>
<evidence type="ECO:0000305" key="2"/>
<proteinExistence type="inferred from homology"/>
<accession>B2RLZ3</accession>
<comment type="function">
    <text evidence="1">Involved in the binding of tRNA to the ribosomes.</text>
</comment>
<comment type="subunit">
    <text evidence="1">Part of the 30S ribosomal subunit.</text>
</comment>
<comment type="similarity">
    <text evidence="1">Belongs to the universal ribosomal protein uS10 family.</text>
</comment>
<gene>
    <name evidence="1" type="primary">rpsJ</name>
    <name type="ordered locus">PGN_1869</name>
</gene>